<sequence length="720" mass="80477">MENEDHNFGTSDWWPNQLDLEILDQNSQQVDPYGEDFDYAEAFEDLDLAAVKDDLEEMMTDSKDWWPADYGHYGPLFIRMAWHSAGTYRTFDGRGGAAGGRQRLPPVDSWPDNVNLDKARRLLWPIKQKYGRKLSWGDLIILAGNVALESMGFETYGFAGGRKDDYTPDEAVDWGPEDEWETTSGDRFDADGSLKWPLGNTVMGLIYVNPEGPNGEPDLEGSAKNIRESFGKMAMNDKETVALIAGGHTFGKVHGADDPEENVGAEPAAAPIEKQGLGWENEFGEGKGPDTITSGIEGPWNTTPTQWDMSYVDNLLEYEWEPEKGPGGAWQWTTKSGELNESAPGVQDPTDTEDVMMLTTDVALKDDPDYREVLETFQENPREFQQSFSKAWYKLIHRDMGPSERFLGPEVPEETMIWQDPLPDADYDLVDDEAVAALKSELLESELSIPQLVKTAWASASTYRDSDKRGGANGARIRLEPQRSWEVNEPEQLEAALSTYEDIQAEFNDARSDDMRVSLADLIVLGGNAAIEQAAADAGYDVDVPFEPGRTDATPEQTDVESFEALKPKADGFRNYLGDDAEREPEELLVDKAELLNLTADDMTVLVGGLRALGVTHGDSELGIFTDQPGTLTNDFFTTLLDMDYEWEAASEDREVFELRDRETGDVEWTGSRVDLLFGSNTRLRAIAEVYGSDADEELFVQDFVDTWSEVMKLDRFDLE</sequence>
<keyword id="KW-0349">Heme</keyword>
<keyword id="KW-0376">Hydrogen peroxide</keyword>
<keyword id="KW-0408">Iron</keyword>
<keyword id="KW-0479">Metal-binding</keyword>
<keyword id="KW-0560">Oxidoreductase</keyword>
<keyword id="KW-0575">Peroxidase</keyword>
<keyword id="KW-0614">Plasmid</keyword>
<keyword id="KW-1185">Reference proteome</keyword>
<protein>
    <recommendedName>
        <fullName evidence="1">Catalase-peroxidase</fullName>
        <shortName evidence="1">CP</shortName>
        <ecNumber evidence="1">1.11.1.21</ecNumber>
    </recommendedName>
    <alternativeName>
        <fullName>Hydroperoxidase</fullName>
    </alternativeName>
    <alternativeName>
        <fullName evidence="1">Peroxidase/catalase</fullName>
    </alternativeName>
</protein>
<organism>
    <name type="scientific">Halobacterium salinarum (strain ATCC 700922 / JCM 11081 / NRC-1)</name>
    <name type="common">Halobacterium halobium</name>
    <dbReference type="NCBI Taxonomy" id="64091"/>
    <lineage>
        <taxon>Archaea</taxon>
        <taxon>Methanobacteriati</taxon>
        <taxon>Methanobacteriota</taxon>
        <taxon>Stenosarchaea group</taxon>
        <taxon>Halobacteria</taxon>
        <taxon>Halobacteriales</taxon>
        <taxon>Halobacteriaceae</taxon>
        <taxon>Halobacterium</taxon>
        <taxon>Halobacterium salinarum NRC-34001</taxon>
    </lineage>
</organism>
<reference key="1">
    <citation type="journal article" date="2001" name="DNA Seq.">
        <title>Molecular cloning, sequencing analysis and expression of the catalase-peroxidase gene from Halobacterium salinarum.</title>
        <authorList>
            <person name="Long S."/>
            <person name="Salin M.L."/>
        </authorList>
    </citation>
    <scope>NUCLEOTIDE SEQUENCE [GENOMIC DNA]</scope>
    <scope>FUNCTION</scope>
</reference>
<reference key="2">
    <citation type="journal article" date="2000" name="Proc. Natl. Acad. Sci. U.S.A.">
        <title>Genome sequence of Halobacterium species NRC-1.</title>
        <authorList>
            <person name="Ng W.V."/>
            <person name="Kennedy S.P."/>
            <person name="Mahairas G.G."/>
            <person name="Berquist B."/>
            <person name="Pan M."/>
            <person name="Shukla H.D."/>
            <person name="Lasky S.R."/>
            <person name="Baliga N.S."/>
            <person name="Thorsson V."/>
            <person name="Sbrogna J."/>
            <person name="Swartzell S."/>
            <person name="Weir D."/>
            <person name="Hall J."/>
            <person name="Dahl T.A."/>
            <person name="Welti R."/>
            <person name="Goo Y.A."/>
            <person name="Leithauser B."/>
            <person name="Keller K."/>
            <person name="Cruz R."/>
            <person name="Danson M.J."/>
            <person name="Hough D.W."/>
            <person name="Maddocks D.G."/>
            <person name="Jablonski P.E."/>
            <person name="Krebs M.P."/>
            <person name="Angevine C.M."/>
            <person name="Dale H."/>
            <person name="Isenbarger T.A."/>
            <person name="Peck R.F."/>
            <person name="Pohlschroder M."/>
            <person name="Spudich J.L."/>
            <person name="Jung K.-H."/>
            <person name="Alam M."/>
            <person name="Freitas T."/>
            <person name="Hou S."/>
            <person name="Daniels C.J."/>
            <person name="Dennis P.P."/>
            <person name="Omer A.D."/>
            <person name="Ebhardt H."/>
            <person name="Lowe T.M."/>
            <person name="Liang P."/>
            <person name="Riley M."/>
            <person name="Hood L."/>
            <person name="DasSarma S."/>
        </authorList>
    </citation>
    <scope>NUCLEOTIDE SEQUENCE [LARGE SCALE GENOMIC DNA]</scope>
    <source>
        <strain>ATCC 700922 / JCM 11081 / NRC-1</strain>
        <plasmid>pNRC200</plasmid>
    </source>
</reference>
<gene>
    <name evidence="1" type="primary">katG</name>
    <name type="synonym">perA</name>
    <name type="ordered locus">VNG_6294G</name>
</gene>
<feature type="chain" id="PRO_0000055581" description="Catalase-peroxidase">
    <location>
        <begin position="1"/>
        <end position="720"/>
    </location>
</feature>
<feature type="active site" description="Proton acceptor" evidence="1">
    <location>
        <position position="83"/>
    </location>
</feature>
<feature type="binding site" description="axial binding residue" evidence="1">
    <location>
        <position position="248"/>
    </location>
    <ligand>
        <name>heme b</name>
        <dbReference type="ChEBI" id="CHEBI:60344"/>
    </ligand>
    <ligandPart>
        <name>Fe</name>
        <dbReference type="ChEBI" id="CHEBI:18248"/>
    </ligandPart>
</feature>
<feature type="site" description="Transition state stabilizer" evidence="1">
    <location>
        <position position="79"/>
    </location>
</feature>
<feature type="cross-link" description="Tryptophyl-tyrosyl-methioninium (Trp-Tyr) (with M-233)" evidence="1">
    <location>
        <begin position="82"/>
        <end position="207"/>
    </location>
</feature>
<feature type="cross-link" description="Tryptophyl-tyrosyl-methioninium (Tyr-Met) (with W-82)" evidence="1">
    <location>
        <begin position="207"/>
        <end position="233"/>
    </location>
</feature>
<name>KATG_HALSA</name>
<dbReference type="EC" id="1.11.1.21" evidence="1"/>
<dbReference type="EMBL" id="AF069761">
    <property type="protein sequence ID" value="AAC23534.1"/>
    <property type="molecule type" value="Genomic_DNA"/>
</dbReference>
<dbReference type="EMBL" id="AE004438">
    <property type="protein sequence ID" value="AAG20931.1"/>
    <property type="molecule type" value="Genomic_DNA"/>
</dbReference>
<dbReference type="PIR" id="T44562">
    <property type="entry name" value="T44562"/>
</dbReference>
<dbReference type="RefSeq" id="WP_010904144.1">
    <property type="nucleotide sequence ID" value="NZ_BK010831.1"/>
</dbReference>
<dbReference type="SMR" id="O73955"/>
<dbReference type="PeroxiBase" id="2441">
    <property type="entry name" value="HAspCP01"/>
</dbReference>
<dbReference type="GeneID" id="68695235"/>
<dbReference type="KEGG" id="hal:VNG_6294G"/>
<dbReference type="PATRIC" id="fig|64091.14.peg.2277"/>
<dbReference type="HOGENOM" id="CLU_025424_2_0_2"/>
<dbReference type="InParanoid" id="O73955"/>
<dbReference type="OrthoDB" id="358790at2157"/>
<dbReference type="PhylomeDB" id="O73955"/>
<dbReference type="Proteomes" id="UP000000554">
    <property type="component" value="Plasmid pNRC200"/>
</dbReference>
<dbReference type="GO" id="GO:0005829">
    <property type="term" value="C:cytosol"/>
    <property type="evidence" value="ECO:0000318"/>
    <property type="project" value="GO_Central"/>
</dbReference>
<dbReference type="GO" id="GO:0004096">
    <property type="term" value="F:catalase activity"/>
    <property type="evidence" value="ECO:0000318"/>
    <property type="project" value="GO_Central"/>
</dbReference>
<dbReference type="GO" id="GO:0020037">
    <property type="term" value="F:heme binding"/>
    <property type="evidence" value="ECO:0000318"/>
    <property type="project" value="GO_Central"/>
</dbReference>
<dbReference type="GO" id="GO:0046872">
    <property type="term" value="F:metal ion binding"/>
    <property type="evidence" value="ECO:0007669"/>
    <property type="project" value="UniProtKB-KW"/>
</dbReference>
<dbReference type="GO" id="GO:0070301">
    <property type="term" value="P:cellular response to hydrogen peroxide"/>
    <property type="evidence" value="ECO:0000318"/>
    <property type="project" value="GO_Central"/>
</dbReference>
<dbReference type="GO" id="GO:0042744">
    <property type="term" value="P:hydrogen peroxide catabolic process"/>
    <property type="evidence" value="ECO:0000318"/>
    <property type="project" value="GO_Central"/>
</dbReference>
<dbReference type="CDD" id="cd08200">
    <property type="entry name" value="catalase_peroxidase_2"/>
    <property type="match status" value="1"/>
</dbReference>
<dbReference type="FunFam" id="1.10.420.10:FF:000004">
    <property type="entry name" value="Catalase-peroxidase"/>
    <property type="match status" value="1"/>
</dbReference>
<dbReference type="FunFam" id="1.10.520.10:FF:000002">
    <property type="entry name" value="Catalase-peroxidase"/>
    <property type="match status" value="1"/>
</dbReference>
<dbReference type="Gene3D" id="1.10.520.10">
    <property type="match status" value="2"/>
</dbReference>
<dbReference type="Gene3D" id="1.10.420.10">
    <property type="entry name" value="Peroxidase, domain 2"/>
    <property type="match status" value="2"/>
</dbReference>
<dbReference type="HAMAP" id="MF_01961">
    <property type="entry name" value="Catal_peroxid"/>
    <property type="match status" value="1"/>
</dbReference>
<dbReference type="InterPro" id="IPR000763">
    <property type="entry name" value="Catalase_peroxidase"/>
</dbReference>
<dbReference type="InterPro" id="IPR002016">
    <property type="entry name" value="Haem_peroxidase"/>
</dbReference>
<dbReference type="InterPro" id="IPR010255">
    <property type="entry name" value="Haem_peroxidase_sf"/>
</dbReference>
<dbReference type="InterPro" id="IPR019794">
    <property type="entry name" value="Peroxidases_AS"/>
</dbReference>
<dbReference type="InterPro" id="IPR019793">
    <property type="entry name" value="Peroxidases_heam-ligand_BS"/>
</dbReference>
<dbReference type="NCBIfam" id="TIGR00198">
    <property type="entry name" value="cat_per_HPI"/>
    <property type="match status" value="1"/>
</dbReference>
<dbReference type="NCBIfam" id="NF011635">
    <property type="entry name" value="PRK15061.1"/>
    <property type="match status" value="1"/>
</dbReference>
<dbReference type="PANTHER" id="PTHR30555:SF0">
    <property type="entry name" value="CATALASE-PEROXIDASE"/>
    <property type="match status" value="1"/>
</dbReference>
<dbReference type="PANTHER" id="PTHR30555">
    <property type="entry name" value="HYDROPEROXIDASE I, BIFUNCTIONAL CATALASE-PEROXIDASE"/>
    <property type="match status" value="1"/>
</dbReference>
<dbReference type="Pfam" id="PF00141">
    <property type="entry name" value="peroxidase"/>
    <property type="match status" value="2"/>
</dbReference>
<dbReference type="PRINTS" id="PR00460">
    <property type="entry name" value="BPEROXIDASE"/>
</dbReference>
<dbReference type="PRINTS" id="PR00458">
    <property type="entry name" value="PEROXIDASE"/>
</dbReference>
<dbReference type="SUPFAM" id="SSF48113">
    <property type="entry name" value="Heme-dependent peroxidases"/>
    <property type="match status" value="2"/>
</dbReference>
<dbReference type="PROSITE" id="PS00435">
    <property type="entry name" value="PEROXIDASE_1"/>
    <property type="match status" value="1"/>
</dbReference>
<dbReference type="PROSITE" id="PS00436">
    <property type="entry name" value="PEROXIDASE_2"/>
    <property type="match status" value="1"/>
</dbReference>
<dbReference type="PROSITE" id="PS50873">
    <property type="entry name" value="PEROXIDASE_4"/>
    <property type="match status" value="1"/>
</dbReference>
<geneLocation type="plasmid">
    <name>pNRC200</name>
</geneLocation>
<evidence type="ECO:0000255" key="1">
    <source>
        <dbReference type="HAMAP-Rule" id="MF_01961"/>
    </source>
</evidence>
<evidence type="ECO:0000269" key="2">
    <source>
    </source>
</evidence>
<accession>O73955</accession>
<accession>Q9HHP5</accession>
<comment type="function">
    <text evidence="1 2">Bifunctional enzyme with both catalase and broad-spectrum peroxidase activity.</text>
</comment>
<comment type="catalytic activity">
    <reaction evidence="1">
        <text>H2O2 + AH2 = A + 2 H2O</text>
        <dbReference type="Rhea" id="RHEA:30275"/>
        <dbReference type="ChEBI" id="CHEBI:13193"/>
        <dbReference type="ChEBI" id="CHEBI:15377"/>
        <dbReference type="ChEBI" id="CHEBI:16240"/>
        <dbReference type="ChEBI" id="CHEBI:17499"/>
        <dbReference type="EC" id="1.11.1.21"/>
    </reaction>
</comment>
<comment type="catalytic activity">
    <reaction evidence="1">
        <text>2 H2O2 = O2 + 2 H2O</text>
        <dbReference type="Rhea" id="RHEA:20309"/>
        <dbReference type="ChEBI" id="CHEBI:15377"/>
        <dbReference type="ChEBI" id="CHEBI:15379"/>
        <dbReference type="ChEBI" id="CHEBI:16240"/>
        <dbReference type="EC" id="1.11.1.21"/>
    </reaction>
</comment>
<comment type="cofactor">
    <cofactor evidence="1">
        <name>heme b</name>
        <dbReference type="ChEBI" id="CHEBI:60344"/>
    </cofactor>
    <text evidence="1">Binds 1 heme b (iron(II)-protoporphyrin IX) group per dimer.</text>
</comment>
<comment type="subunit">
    <text evidence="1">Homodimer or homotetramer.</text>
</comment>
<comment type="PTM">
    <text evidence="1">Formation of the three residue Trp-Tyr-Met cross-link is important for the catalase, but not the peroxidase activity of the enzyme.</text>
</comment>
<comment type="similarity">
    <text evidence="1">Belongs to the peroxidase family. Peroxidase/catalase subfamily.</text>
</comment>
<proteinExistence type="inferred from homology"/>